<keyword id="KW-0068">Autocatalytic cleavage</keyword>
<keyword id="KW-0227">DNA damage</keyword>
<keyword id="KW-0234">DNA repair</keyword>
<keyword id="KW-0235">DNA replication</keyword>
<keyword id="KW-0238">DNA-binding</keyword>
<keyword id="KW-0378">Hydrolase</keyword>
<keyword id="KW-1185">Reference proteome</keyword>
<keyword id="KW-0678">Repressor</keyword>
<keyword id="KW-0742">SOS response</keyword>
<keyword id="KW-0804">Transcription</keyword>
<keyword id="KW-0805">Transcription regulation</keyword>
<feature type="chain" id="PRO_0000322745" description="LexA repressor">
    <location>
        <begin position="1"/>
        <end position="243"/>
    </location>
</feature>
<feature type="DNA-binding region" description="H-T-H motif" evidence="1">
    <location>
        <begin position="56"/>
        <end position="76"/>
    </location>
</feature>
<feature type="region of interest" description="Disordered" evidence="2">
    <location>
        <begin position="1"/>
        <end position="30"/>
    </location>
</feature>
<feature type="compositionally biased region" description="Basic and acidic residues" evidence="2">
    <location>
        <begin position="21"/>
        <end position="30"/>
    </location>
</feature>
<feature type="active site" description="For autocatalytic cleavage activity" evidence="1">
    <location>
        <position position="167"/>
    </location>
</feature>
<feature type="active site" description="For autocatalytic cleavage activity" evidence="1">
    <location>
        <position position="204"/>
    </location>
</feature>
<feature type="site" description="Cleavage; by autolysis" evidence="1">
    <location>
        <begin position="132"/>
        <end position="133"/>
    </location>
</feature>
<comment type="function">
    <text evidence="1">Represses a number of genes involved in the response to DNA damage (SOS response), including recA and lexA. In the presence of single-stranded DNA, RecA interacts with LexA causing an autocatalytic cleavage which disrupts the DNA-binding part of LexA, leading to derepression of the SOS regulon and eventually DNA repair.</text>
</comment>
<comment type="catalytic activity">
    <reaction evidence="1">
        <text>Hydrolysis of Ala-|-Gly bond in repressor LexA.</text>
        <dbReference type="EC" id="3.4.21.88"/>
    </reaction>
</comment>
<comment type="subunit">
    <text evidence="1">Homodimer.</text>
</comment>
<comment type="similarity">
    <text evidence="1">Belongs to the peptidase S24 family.</text>
</comment>
<protein>
    <recommendedName>
        <fullName evidence="1">LexA repressor</fullName>
        <ecNumber evidence="1">3.4.21.88</ecNumber>
    </recommendedName>
</protein>
<evidence type="ECO:0000255" key="1">
    <source>
        <dbReference type="HAMAP-Rule" id="MF_00015"/>
    </source>
</evidence>
<evidence type="ECO:0000256" key="2">
    <source>
        <dbReference type="SAM" id="MobiDB-lite"/>
    </source>
</evidence>
<proteinExistence type="inferred from homology"/>
<sequence>MSDDTGEFTDGSTESPADADGAGRRRAVDNGLTERQRTILEVIRASVTSRGYPPSIREIGDAVGLTSTSSVAHQLRTLERKGYLRRDPNRPRAVDVRAADDPAAAAVVTTDVAGSDALPEPTFVPVLGRIAAGGPILAEEAVEDVFPLPRELVGEGSLFLLKVVGDSMVDAAICDGDWVVVRQQNVADNGDIVAAMIDGEATVKTFKRARGQVWLMPHNPAYDPIPGNEAAVLGKVVTVIRKI</sequence>
<accession>A0QVY5</accession>
<accession>I7G7A4</accession>
<reference key="1">
    <citation type="submission" date="2006-10" db="EMBL/GenBank/DDBJ databases">
        <authorList>
            <person name="Fleischmann R.D."/>
            <person name="Dodson R.J."/>
            <person name="Haft D.H."/>
            <person name="Merkel J.S."/>
            <person name="Nelson W.C."/>
            <person name="Fraser C.M."/>
        </authorList>
    </citation>
    <scope>NUCLEOTIDE SEQUENCE [LARGE SCALE GENOMIC DNA]</scope>
    <source>
        <strain>ATCC 700084 / mc(2)155</strain>
    </source>
</reference>
<reference key="2">
    <citation type="journal article" date="2007" name="Genome Biol.">
        <title>Interrupted coding sequences in Mycobacterium smegmatis: authentic mutations or sequencing errors?</title>
        <authorList>
            <person name="Deshayes C."/>
            <person name="Perrodou E."/>
            <person name="Gallien S."/>
            <person name="Euphrasie D."/>
            <person name="Schaeffer C."/>
            <person name="Van-Dorsselaer A."/>
            <person name="Poch O."/>
            <person name="Lecompte O."/>
            <person name="Reyrat J.-M."/>
        </authorList>
    </citation>
    <scope>NUCLEOTIDE SEQUENCE [LARGE SCALE GENOMIC DNA]</scope>
    <source>
        <strain>ATCC 700084 / mc(2)155</strain>
    </source>
</reference>
<reference key="3">
    <citation type="journal article" date="2009" name="Genome Res.">
        <title>Ortho-proteogenomics: multiple proteomes investigation through orthology and a new MS-based protocol.</title>
        <authorList>
            <person name="Gallien S."/>
            <person name="Perrodou E."/>
            <person name="Carapito C."/>
            <person name="Deshayes C."/>
            <person name="Reyrat J.-M."/>
            <person name="Van Dorsselaer A."/>
            <person name="Poch O."/>
            <person name="Schaeffer C."/>
            <person name="Lecompte O."/>
        </authorList>
    </citation>
    <scope>NUCLEOTIDE SEQUENCE [LARGE SCALE GENOMIC DNA]</scope>
    <source>
        <strain>ATCC 700084 / mc(2)155</strain>
    </source>
</reference>
<name>LEXA_MYCS2</name>
<dbReference type="EC" id="3.4.21.88" evidence="1"/>
<dbReference type="EMBL" id="CP000480">
    <property type="protein sequence ID" value="ABK70187.1"/>
    <property type="molecule type" value="Genomic_DNA"/>
</dbReference>
<dbReference type="EMBL" id="CP001663">
    <property type="protein sequence ID" value="AFP39141.1"/>
    <property type="molecule type" value="Genomic_DNA"/>
</dbReference>
<dbReference type="RefSeq" id="WP_003894124.1">
    <property type="nucleotide sequence ID" value="NZ_SIJM01000032.1"/>
</dbReference>
<dbReference type="RefSeq" id="YP_887073.1">
    <property type="nucleotide sequence ID" value="NC_008596.1"/>
</dbReference>
<dbReference type="SMR" id="A0QVY5"/>
<dbReference type="STRING" id="246196.MSMEG_2740"/>
<dbReference type="MEROPS" id="S24.001"/>
<dbReference type="PaxDb" id="246196-MSMEI_2673"/>
<dbReference type="GeneID" id="93457523"/>
<dbReference type="KEGG" id="msb:LJ00_13625"/>
<dbReference type="KEGG" id="msg:MSMEI_2673"/>
<dbReference type="KEGG" id="msm:MSMEG_2740"/>
<dbReference type="PATRIC" id="fig|246196.19.peg.2708"/>
<dbReference type="eggNOG" id="COG1974">
    <property type="taxonomic scope" value="Bacteria"/>
</dbReference>
<dbReference type="OrthoDB" id="9802364at2"/>
<dbReference type="Proteomes" id="UP000000757">
    <property type="component" value="Chromosome"/>
</dbReference>
<dbReference type="Proteomes" id="UP000006158">
    <property type="component" value="Chromosome"/>
</dbReference>
<dbReference type="CollecTF" id="EXPREG_00000170"/>
<dbReference type="GO" id="GO:0032993">
    <property type="term" value="C:protein-DNA complex"/>
    <property type="evidence" value="ECO:0000315"/>
    <property type="project" value="CollecTF"/>
</dbReference>
<dbReference type="GO" id="GO:0001217">
    <property type="term" value="F:DNA-binding transcription repressor activity"/>
    <property type="evidence" value="ECO:0000315"/>
    <property type="project" value="CollecTF"/>
</dbReference>
<dbReference type="GO" id="GO:0004252">
    <property type="term" value="F:serine-type endopeptidase activity"/>
    <property type="evidence" value="ECO:0007669"/>
    <property type="project" value="UniProtKB-UniRule"/>
</dbReference>
<dbReference type="GO" id="GO:0000976">
    <property type="term" value="F:transcription cis-regulatory region binding"/>
    <property type="evidence" value="ECO:0000315"/>
    <property type="project" value="CollecTF"/>
</dbReference>
<dbReference type="GO" id="GO:0006281">
    <property type="term" value="P:DNA repair"/>
    <property type="evidence" value="ECO:0007669"/>
    <property type="project" value="UniProtKB-UniRule"/>
</dbReference>
<dbReference type="GO" id="GO:0006260">
    <property type="term" value="P:DNA replication"/>
    <property type="evidence" value="ECO:0007669"/>
    <property type="project" value="UniProtKB-UniRule"/>
</dbReference>
<dbReference type="GO" id="GO:0006508">
    <property type="term" value="P:proteolysis"/>
    <property type="evidence" value="ECO:0007669"/>
    <property type="project" value="InterPro"/>
</dbReference>
<dbReference type="GO" id="GO:0009432">
    <property type="term" value="P:SOS response"/>
    <property type="evidence" value="ECO:0007669"/>
    <property type="project" value="UniProtKB-UniRule"/>
</dbReference>
<dbReference type="CDD" id="cd06529">
    <property type="entry name" value="S24_LexA-like"/>
    <property type="match status" value="1"/>
</dbReference>
<dbReference type="FunFam" id="1.10.10.10:FF:000009">
    <property type="entry name" value="LexA repressor"/>
    <property type="match status" value="1"/>
</dbReference>
<dbReference type="FunFam" id="2.10.109.10:FF:000001">
    <property type="entry name" value="LexA repressor"/>
    <property type="match status" value="1"/>
</dbReference>
<dbReference type="Gene3D" id="2.10.109.10">
    <property type="entry name" value="Umud Fragment, subunit A"/>
    <property type="match status" value="1"/>
</dbReference>
<dbReference type="Gene3D" id="1.10.10.10">
    <property type="entry name" value="Winged helix-like DNA-binding domain superfamily/Winged helix DNA-binding domain"/>
    <property type="match status" value="1"/>
</dbReference>
<dbReference type="HAMAP" id="MF_00015">
    <property type="entry name" value="LexA"/>
    <property type="match status" value="1"/>
</dbReference>
<dbReference type="InterPro" id="IPR006200">
    <property type="entry name" value="LexA"/>
</dbReference>
<dbReference type="InterPro" id="IPR039418">
    <property type="entry name" value="LexA-like"/>
</dbReference>
<dbReference type="InterPro" id="IPR036286">
    <property type="entry name" value="LexA/Signal_pep-like_sf"/>
</dbReference>
<dbReference type="InterPro" id="IPR006199">
    <property type="entry name" value="LexA_DNA-bd_dom"/>
</dbReference>
<dbReference type="InterPro" id="IPR050077">
    <property type="entry name" value="LexA_repressor"/>
</dbReference>
<dbReference type="InterPro" id="IPR006197">
    <property type="entry name" value="Peptidase_S24_LexA"/>
</dbReference>
<dbReference type="InterPro" id="IPR015927">
    <property type="entry name" value="Peptidase_S24_S26A/B/C"/>
</dbReference>
<dbReference type="InterPro" id="IPR036388">
    <property type="entry name" value="WH-like_DNA-bd_sf"/>
</dbReference>
<dbReference type="InterPro" id="IPR036390">
    <property type="entry name" value="WH_DNA-bd_sf"/>
</dbReference>
<dbReference type="NCBIfam" id="TIGR00498">
    <property type="entry name" value="lexA"/>
    <property type="match status" value="1"/>
</dbReference>
<dbReference type="PANTHER" id="PTHR33516">
    <property type="entry name" value="LEXA REPRESSOR"/>
    <property type="match status" value="1"/>
</dbReference>
<dbReference type="PANTHER" id="PTHR33516:SF2">
    <property type="entry name" value="LEXA REPRESSOR-RELATED"/>
    <property type="match status" value="1"/>
</dbReference>
<dbReference type="Pfam" id="PF01726">
    <property type="entry name" value="LexA_DNA_bind"/>
    <property type="match status" value="1"/>
</dbReference>
<dbReference type="Pfam" id="PF00717">
    <property type="entry name" value="Peptidase_S24"/>
    <property type="match status" value="1"/>
</dbReference>
<dbReference type="PRINTS" id="PR00726">
    <property type="entry name" value="LEXASERPTASE"/>
</dbReference>
<dbReference type="SUPFAM" id="SSF51306">
    <property type="entry name" value="LexA/Signal peptidase"/>
    <property type="match status" value="1"/>
</dbReference>
<dbReference type="SUPFAM" id="SSF46785">
    <property type="entry name" value="Winged helix' DNA-binding domain"/>
    <property type="match status" value="1"/>
</dbReference>
<organism>
    <name type="scientific">Mycolicibacterium smegmatis (strain ATCC 700084 / mc(2)155)</name>
    <name type="common">Mycobacterium smegmatis</name>
    <dbReference type="NCBI Taxonomy" id="246196"/>
    <lineage>
        <taxon>Bacteria</taxon>
        <taxon>Bacillati</taxon>
        <taxon>Actinomycetota</taxon>
        <taxon>Actinomycetes</taxon>
        <taxon>Mycobacteriales</taxon>
        <taxon>Mycobacteriaceae</taxon>
        <taxon>Mycolicibacterium</taxon>
    </lineage>
</organism>
<gene>
    <name evidence="1" type="primary">lexA</name>
    <name type="ordered locus">MSMEG_2740</name>
    <name type="ordered locus">MSMEI_2673</name>
</gene>